<organism>
    <name type="scientific">Alpinia calcarata</name>
    <name type="common">Snap ginger</name>
    <name type="synonym">Maranta galanga</name>
    <dbReference type="NCBI Taxonomy" id="199618"/>
    <lineage>
        <taxon>Eukaryota</taxon>
        <taxon>Viridiplantae</taxon>
        <taxon>Streptophyta</taxon>
        <taxon>Embryophyta</taxon>
        <taxon>Tracheophyta</taxon>
        <taxon>Spermatophyta</taxon>
        <taxon>Magnoliopsida</taxon>
        <taxon>Liliopsida</taxon>
        <taxon>Zingiberales</taxon>
        <taxon>Zingiberaceae</taxon>
        <taxon>Alpinia</taxon>
    </lineage>
</organism>
<reference key="1">
    <citation type="journal article" date="2002" name="Am. J. Bot.">
        <title>The phylogeny and a new classification of the gingers (Zingiberaceae): evidence from molecular data.</title>
        <authorList>
            <person name="Kress W.J."/>
            <person name="Prince L.M."/>
            <person name="Williams K.J."/>
        </authorList>
    </citation>
    <scope>NUCLEOTIDE SEQUENCE [GENOMIC DNA]</scope>
    <source>
        <tissue>Leaf</tissue>
    </source>
</reference>
<dbReference type="EMBL" id="AF478810">
    <property type="protein sequence ID" value="AAN63167.1"/>
    <property type="molecule type" value="Genomic_DNA"/>
</dbReference>
<dbReference type="GO" id="GO:0009507">
    <property type="term" value="C:chloroplast"/>
    <property type="evidence" value="ECO:0007669"/>
    <property type="project" value="UniProtKB-SubCell"/>
</dbReference>
<dbReference type="GO" id="GO:0003723">
    <property type="term" value="F:RNA binding"/>
    <property type="evidence" value="ECO:0007669"/>
    <property type="project" value="UniProtKB-KW"/>
</dbReference>
<dbReference type="GO" id="GO:0006397">
    <property type="term" value="P:mRNA processing"/>
    <property type="evidence" value="ECO:0007669"/>
    <property type="project" value="UniProtKB-KW"/>
</dbReference>
<dbReference type="GO" id="GO:0008380">
    <property type="term" value="P:RNA splicing"/>
    <property type="evidence" value="ECO:0007669"/>
    <property type="project" value="UniProtKB-UniRule"/>
</dbReference>
<dbReference type="GO" id="GO:0008033">
    <property type="term" value="P:tRNA processing"/>
    <property type="evidence" value="ECO:0007669"/>
    <property type="project" value="UniProtKB-KW"/>
</dbReference>
<dbReference type="HAMAP" id="MF_01390">
    <property type="entry name" value="MatK"/>
    <property type="match status" value="1"/>
</dbReference>
<dbReference type="InterPro" id="IPR024937">
    <property type="entry name" value="Domain_X"/>
</dbReference>
<dbReference type="InterPro" id="IPR002866">
    <property type="entry name" value="Maturase_MatK"/>
</dbReference>
<dbReference type="InterPro" id="IPR024942">
    <property type="entry name" value="Maturase_MatK_N"/>
</dbReference>
<dbReference type="PANTHER" id="PTHR34811">
    <property type="entry name" value="MATURASE K"/>
    <property type="match status" value="1"/>
</dbReference>
<dbReference type="PANTHER" id="PTHR34811:SF1">
    <property type="entry name" value="MATURASE K"/>
    <property type="match status" value="1"/>
</dbReference>
<dbReference type="Pfam" id="PF01348">
    <property type="entry name" value="Intron_maturas2"/>
    <property type="match status" value="1"/>
</dbReference>
<dbReference type="Pfam" id="PF01824">
    <property type="entry name" value="MatK_N"/>
    <property type="match status" value="1"/>
</dbReference>
<accession>Q8HVA1</accession>
<protein>
    <recommendedName>
        <fullName evidence="1">Maturase K</fullName>
    </recommendedName>
    <alternativeName>
        <fullName evidence="1">Intron maturase</fullName>
    </alternativeName>
</protein>
<sequence length="515" mass="61967">MEELQGYLEEYRSRQQQFLYPLLFQEYIYVFAYDHGLNSSIFYEPQNSLGYDNKFSSVLVKRLIIRMYQKNYWIYSVNDIYQNIFVGHNNYFYFHFFSQILSEGFAVIVEIPFSLQLISSLEEKEIPKSHNLQSSHSIFPFLEDKLLHLNYLSDILIPYPAHMEILVQMLQSWIQDALSLHLLQFLLHEYYNWNSLIIPNKSIYVFSKDNKRLFCFLYNLYIYEYEFLLVFPCKQSSFLRLISSGVLLERIHFYVKIEHLGVCRIFCQKTLWIFKDPFIHYIRYQGKSILGSRGTHFLMKKWKYHLVHFWQYYFHFWSQPYRIDTKKLSNYSFYFLGYFSSVQMNSSMVRNQMLENSFLMDTLTKKLDTRIPIIPLIRSLSKAQFCTVSGYPISKPIWTDLADCDIINRFGRICRKLSHYHSGSSKKQSLYRMKYILRLSCARTLARKHKSSARSFLQRLSSGLLEEFFTEEEQVISLIFPKRTSFYLYGSYRERIWYLDIIRINDLVNSLLVTT</sequence>
<gene>
    <name evidence="1" type="primary">matK</name>
</gene>
<proteinExistence type="inferred from homology"/>
<evidence type="ECO:0000255" key="1">
    <source>
        <dbReference type="HAMAP-Rule" id="MF_01390"/>
    </source>
</evidence>
<comment type="function">
    <text evidence="1">Usually encoded in the trnK tRNA gene intron. Probably assists in splicing its own and other chloroplast group II introns.</text>
</comment>
<comment type="subcellular location">
    <subcellularLocation>
        <location>Plastid</location>
        <location>Chloroplast</location>
    </subcellularLocation>
</comment>
<comment type="similarity">
    <text evidence="1">Belongs to the intron maturase 2 family. MatK subfamily.</text>
</comment>
<geneLocation type="chloroplast"/>
<name>MATK_ALPCA</name>
<keyword id="KW-0150">Chloroplast</keyword>
<keyword id="KW-0507">mRNA processing</keyword>
<keyword id="KW-0934">Plastid</keyword>
<keyword id="KW-0694">RNA-binding</keyword>
<keyword id="KW-0819">tRNA processing</keyword>
<feature type="chain" id="PRO_0000143222" description="Maturase K">
    <location>
        <begin position="1"/>
        <end position="515"/>
    </location>
</feature>